<name>PEPE_ECOHS</name>
<protein>
    <recommendedName>
        <fullName evidence="1">Peptidase E</fullName>
        <ecNumber evidence="1">3.4.13.21</ecNumber>
    </recommendedName>
    <alternativeName>
        <fullName evidence="1">Alpha-aspartyl dipeptidase</fullName>
    </alternativeName>
    <alternativeName>
        <fullName evidence="1">Asp-specific dipeptidase</fullName>
    </alternativeName>
    <alternativeName>
        <fullName evidence="1">Dipeptidase E</fullName>
    </alternativeName>
</protein>
<evidence type="ECO:0000255" key="1">
    <source>
        <dbReference type="HAMAP-Rule" id="MF_00510"/>
    </source>
</evidence>
<organism>
    <name type="scientific">Escherichia coli O9:H4 (strain HS)</name>
    <dbReference type="NCBI Taxonomy" id="331112"/>
    <lineage>
        <taxon>Bacteria</taxon>
        <taxon>Pseudomonadati</taxon>
        <taxon>Pseudomonadota</taxon>
        <taxon>Gammaproteobacteria</taxon>
        <taxon>Enterobacterales</taxon>
        <taxon>Enterobacteriaceae</taxon>
        <taxon>Escherichia</taxon>
    </lineage>
</organism>
<comment type="function">
    <text evidence="1">Hydrolyzes dipeptides containing N-terminal aspartate residues. May play a role in allowing the cell to use peptide aspartate to spare carbon otherwise required for the synthesis of the aspartate family of amino acids.</text>
</comment>
<comment type="catalytic activity">
    <reaction evidence="1">
        <text>Dipeptidase E catalyzes the hydrolysis of dipeptides Asp-|-Xaa. It does not act on peptides with N-terminal Glu, Asn or Gln, nor does it cleave isoaspartyl peptides.</text>
        <dbReference type="EC" id="3.4.13.21"/>
    </reaction>
</comment>
<comment type="subcellular location">
    <subcellularLocation>
        <location evidence="1">Cytoplasm</location>
    </subcellularLocation>
</comment>
<comment type="similarity">
    <text evidence="1">Belongs to the peptidase S51 family.</text>
</comment>
<accession>A8A7B7</accession>
<proteinExistence type="inferred from homology"/>
<keyword id="KW-0963">Cytoplasm</keyword>
<keyword id="KW-0224">Dipeptidase</keyword>
<keyword id="KW-0378">Hydrolase</keyword>
<keyword id="KW-0645">Protease</keyword>
<keyword id="KW-0720">Serine protease</keyword>
<dbReference type="EC" id="3.4.13.21" evidence="1"/>
<dbReference type="EMBL" id="CP000802">
    <property type="protein sequence ID" value="ABV08421.1"/>
    <property type="molecule type" value="Genomic_DNA"/>
</dbReference>
<dbReference type="RefSeq" id="WP_000421763.1">
    <property type="nucleotide sequence ID" value="NC_009800.1"/>
</dbReference>
<dbReference type="SMR" id="A8A7B7"/>
<dbReference type="MEROPS" id="S51.001"/>
<dbReference type="GeneID" id="93777874"/>
<dbReference type="KEGG" id="ecx:EcHS_A4257"/>
<dbReference type="HOGENOM" id="CLU_071689_0_0_6"/>
<dbReference type="GO" id="GO:0005737">
    <property type="term" value="C:cytoplasm"/>
    <property type="evidence" value="ECO:0007669"/>
    <property type="project" value="UniProtKB-SubCell"/>
</dbReference>
<dbReference type="GO" id="GO:0016805">
    <property type="term" value="F:dipeptidase activity"/>
    <property type="evidence" value="ECO:0007669"/>
    <property type="project" value="UniProtKB-UniRule"/>
</dbReference>
<dbReference type="GO" id="GO:0008236">
    <property type="term" value="F:serine-type peptidase activity"/>
    <property type="evidence" value="ECO:0007669"/>
    <property type="project" value="UniProtKB-KW"/>
</dbReference>
<dbReference type="GO" id="GO:0006508">
    <property type="term" value="P:proteolysis"/>
    <property type="evidence" value="ECO:0007669"/>
    <property type="project" value="UniProtKB-UniRule"/>
</dbReference>
<dbReference type="CDD" id="cd03146">
    <property type="entry name" value="GAT1_Peptidase_E"/>
    <property type="match status" value="1"/>
</dbReference>
<dbReference type="FunFam" id="3.40.50.880:FF:000007">
    <property type="entry name" value="Peptidase E"/>
    <property type="match status" value="1"/>
</dbReference>
<dbReference type="Gene3D" id="3.40.50.880">
    <property type="match status" value="1"/>
</dbReference>
<dbReference type="HAMAP" id="MF_00510">
    <property type="entry name" value="Peptidase_E"/>
    <property type="match status" value="1"/>
</dbReference>
<dbReference type="InterPro" id="IPR029062">
    <property type="entry name" value="Class_I_gatase-like"/>
</dbReference>
<dbReference type="InterPro" id="IPR005320">
    <property type="entry name" value="Peptidase_S51"/>
</dbReference>
<dbReference type="InterPro" id="IPR023172">
    <property type="entry name" value="Peptidase_S51_dipeptidase-E"/>
</dbReference>
<dbReference type="NCBIfam" id="NF003642">
    <property type="entry name" value="PRK05282.1"/>
    <property type="match status" value="1"/>
</dbReference>
<dbReference type="PANTHER" id="PTHR20842:SF0">
    <property type="entry name" value="ALPHA-ASPARTYL DIPEPTIDASE"/>
    <property type="match status" value="1"/>
</dbReference>
<dbReference type="PANTHER" id="PTHR20842">
    <property type="entry name" value="PROTEASE S51 ALPHA-ASPARTYL DIPEPTIDASE"/>
    <property type="match status" value="1"/>
</dbReference>
<dbReference type="Pfam" id="PF03575">
    <property type="entry name" value="Peptidase_S51"/>
    <property type="match status" value="1"/>
</dbReference>
<dbReference type="SUPFAM" id="SSF52317">
    <property type="entry name" value="Class I glutamine amidotransferase-like"/>
    <property type="match status" value="1"/>
</dbReference>
<sequence>MELLLLSNSTLPGKAWLEHALPLIAEQLQGRRSAVFIPFAGVTQTWDDYTAKTAAVLAPLGVSVTGIHSVVDPVAAIENAEIVIVGGGNTFQLLKQCRERGLLAPITDVVKRGALYIGWSAGANLACPTIRTTNDMPIVDPQGFDALNLFPLQINPHFTNALPEGHKGETREQRIRELLVVAPELTIIGLPEGNWITVSKGHATLGGPNTTYVFKAGEEAVPLEAGHRF</sequence>
<gene>
    <name evidence="1" type="primary">pepE</name>
    <name type="ordered locus">EcHS_A4257</name>
</gene>
<feature type="chain" id="PRO_1000060873" description="Peptidase E">
    <location>
        <begin position="1"/>
        <end position="229"/>
    </location>
</feature>
<feature type="active site" description="Charge relay system" evidence="1">
    <location>
        <position position="120"/>
    </location>
</feature>
<feature type="active site" description="Charge relay system" evidence="1">
    <location>
        <position position="135"/>
    </location>
</feature>
<feature type="active site" description="Charge relay system" evidence="1">
    <location>
        <position position="157"/>
    </location>
</feature>
<reference key="1">
    <citation type="journal article" date="2008" name="J. Bacteriol.">
        <title>The pangenome structure of Escherichia coli: comparative genomic analysis of E. coli commensal and pathogenic isolates.</title>
        <authorList>
            <person name="Rasko D.A."/>
            <person name="Rosovitz M.J."/>
            <person name="Myers G.S.A."/>
            <person name="Mongodin E.F."/>
            <person name="Fricke W.F."/>
            <person name="Gajer P."/>
            <person name="Crabtree J."/>
            <person name="Sebaihia M."/>
            <person name="Thomson N.R."/>
            <person name="Chaudhuri R."/>
            <person name="Henderson I.R."/>
            <person name="Sperandio V."/>
            <person name="Ravel J."/>
        </authorList>
    </citation>
    <scope>NUCLEOTIDE SEQUENCE [LARGE SCALE GENOMIC DNA]</scope>
    <source>
        <strain>HS</strain>
    </source>
</reference>